<comment type="similarity">
    <text evidence="1">Belongs to the UPF0482 family.</text>
</comment>
<feature type="signal peptide" evidence="1">
    <location>
        <begin position="1"/>
        <end position="28"/>
    </location>
</feature>
<feature type="chain" id="PRO_5000397177" description="UPF0482 protein YnfB">
    <location>
        <begin position="29"/>
        <end position="113"/>
    </location>
</feature>
<name>YNFB_SALEP</name>
<keyword id="KW-0732">Signal</keyword>
<dbReference type="EMBL" id="AM933172">
    <property type="protein sequence ID" value="CAR33127.1"/>
    <property type="molecule type" value="Genomic_DNA"/>
</dbReference>
<dbReference type="RefSeq" id="WP_001066440.1">
    <property type="nucleotide sequence ID" value="NC_011294.1"/>
</dbReference>
<dbReference type="KEGG" id="set:SEN1547"/>
<dbReference type="HOGENOM" id="CLU_167574_0_0_6"/>
<dbReference type="Proteomes" id="UP000000613">
    <property type="component" value="Chromosome"/>
</dbReference>
<dbReference type="HAMAP" id="MF_01581">
    <property type="entry name" value="UPF0482"/>
    <property type="match status" value="1"/>
</dbReference>
<dbReference type="InterPro" id="IPR009700">
    <property type="entry name" value="DUF1283"/>
</dbReference>
<dbReference type="NCBIfam" id="NF010180">
    <property type="entry name" value="PRK13659.1"/>
    <property type="match status" value="1"/>
</dbReference>
<dbReference type="Pfam" id="PF06932">
    <property type="entry name" value="DUF1283"/>
    <property type="match status" value="1"/>
</dbReference>
<sequence length="113" mass="12846">MNNTLSKRLCLTAMLTLAAVVYTTSAFAETSKLVIESGDSAQSRQEAAMEKEQWNDTRSLRQKVNTRAEKEWDKADAAFDNRDKCEQSANINAYWEPNTLRCLDRRTGRVITP</sequence>
<accession>B5QUC3</accession>
<organism>
    <name type="scientific">Salmonella enteritidis PT4 (strain P125109)</name>
    <dbReference type="NCBI Taxonomy" id="550537"/>
    <lineage>
        <taxon>Bacteria</taxon>
        <taxon>Pseudomonadati</taxon>
        <taxon>Pseudomonadota</taxon>
        <taxon>Gammaproteobacteria</taxon>
        <taxon>Enterobacterales</taxon>
        <taxon>Enterobacteriaceae</taxon>
        <taxon>Salmonella</taxon>
    </lineage>
</organism>
<protein>
    <recommendedName>
        <fullName evidence="1">UPF0482 protein YnfB</fullName>
    </recommendedName>
</protein>
<evidence type="ECO:0000255" key="1">
    <source>
        <dbReference type="HAMAP-Rule" id="MF_01581"/>
    </source>
</evidence>
<gene>
    <name evidence="1" type="primary">ynfB</name>
    <name type="ordered locus">SEN1547</name>
</gene>
<reference key="1">
    <citation type="journal article" date="2008" name="Genome Res.">
        <title>Comparative genome analysis of Salmonella enteritidis PT4 and Salmonella gallinarum 287/91 provides insights into evolutionary and host adaptation pathways.</title>
        <authorList>
            <person name="Thomson N.R."/>
            <person name="Clayton D.J."/>
            <person name="Windhorst D."/>
            <person name="Vernikos G."/>
            <person name="Davidson S."/>
            <person name="Churcher C."/>
            <person name="Quail M.A."/>
            <person name="Stevens M."/>
            <person name="Jones M.A."/>
            <person name="Watson M."/>
            <person name="Barron A."/>
            <person name="Layton A."/>
            <person name="Pickard D."/>
            <person name="Kingsley R.A."/>
            <person name="Bignell A."/>
            <person name="Clark L."/>
            <person name="Harris B."/>
            <person name="Ormond D."/>
            <person name="Abdellah Z."/>
            <person name="Brooks K."/>
            <person name="Cherevach I."/>
            <person name="Chillingworth T."/>
            <person name="Woodward J."/>
            <person name="Norberczak H."/>
            <person name="Lord A."/>
            <person name="Arrowsmith C."/>
            <person name="Jagels K."/>
            <person name="Moule S."/>
            <person name="Mungall K."/>
            <person name="Saunders M."/>
            <person name="Whitehead S."/>
            <person name="Chabalgoity J.A."/>
            <person name="Maskell D."/>
            <person name="Humphreys T."/>
            <person name="Roberts M."/>
            <person name="Barrow P.A."/>
            <person name="Dougan G."/>
            <person name="Parkhill J."/>
        </authorList>
    </citation>
    <scope>NUCLEOTIDE SEQUENCE [LARGE SCALE GENOMIC DNA]</scope>
    <source>
        <strain>P125109</strain>
    </source>
</reference>
<proteinExistence type="inferred from homology"/>